<organism>
    <name type="scientific">Leptospira interrogans serogroup Icterohaemorrhagiae serovar copenhageni (strain Fiocruz L1-130)</name>
    <dbReference type="NCBI Taxonomy" id="267671"/>
    <lineage>
        <taxon>Bacteria</taxon>
        <taxon>Pseudomonadati</taxon>
        <taxon>Spirochaetota</taxon>
        <taxon>Spirochaetia</taxon>
        <taxon>Leptospirales</taxon>
        <taxon>Leptospiraceae</taxon>
        <taxon>Leptospira</taxon>
    </lineage>
</organism>
<feature type="chain" id="PRO_0000177834" description="D-alanine--D-alanine ligase">
    <location>
        <begin position="1"/>
        <end position="351"/>
    </location>
</feature>
<feature type="domain" description="ATP-grasp" evidence="2">
    <location>
        <begin position="135"/>
        <end position="343"/>
    </location>
</feature>
<feature type="binding site" evidence="2">
    <location>
        <begin position="167"/>
        <end position="222"/>
    </location>
    <ligand>
        <name>ATP</name>
        <dbReference type="ChEBI" id="CHEBI:30616"/>
    </ligand>
</feature>
<feature type="binding site" evidence="2">
    <location>
        <position position="298"/>
    </location>
    <ligand>
        <name>Mg(2+)</name>
        <dbReference type="ChEBI" id="CHEBI:18420"/>
        <label>1</label>
    </ligand>
</feature>
<feature type="binding site" evidence="2">
    <location>
        <position position="310"/>
    </location>
    <ligand>
        <name>Mg(2+)</name>
        <dbReference type="ChEBI" id="CHEBI:18420"/>
        <label>1</label>
    </ligand>
</feature>
<feature type="binding site" evidence="2">
    <location>
        <position position="310"/>
    </location>
    <ligand>
        <name>Mg(2+)</name>
        <dbReference type="ChEBI" id="CHEBI:18420"/>
        <label>2</label>
    </ligand>
</feature>
<feature type="binding site" evidence="2">
    <location>
        <position position="312"/>
    </location>
    <ligand>
        <name>Mg(2+)</name>
        <dbReference type="ChEBI" id="CHEBI:18420"/>
        <label>2</label>
    </ligand>
</feature>
<name>DDL_LEPIC</name>
<proteinExistence type="inferred from homology"/>
<evidence type="ECO:0000250" key="1"/>
<evidence type="ECO:0000255" key="2">
    <source>
        <dbReference type="HAMAP-Rule" id="MF_00047"/>
    </source>
</evidence>
<protein>
    <recommendedName>
        <fullName evidence="2">D-alanine--D-alanine ligase</fullName>
        <ecNumber evidence="2">6.3.2.4</ecNumber>
    </recommendedName>
    <alternativeName>
        <fullName evidence="2">D-Ala-D-Ala ligase</fullName>
    </alternativeName>
    <alternativeName>
        <fullName evidence="2">D-alanylalanine synthetase</fullName>
    </alternativeName>
</protein>
<reference key="1">
    <citation type="journal article" date="2004" name="J. Bacteriol.">
        <title>Comparative genomics of two Leptospira interrogans serovars reveals novel insights into physiology and pathogenesis.</title>
        <authorList>
            <person name="Nascimento A.L.T.O."/>
            <person name="Ko A.I."/>
            <person name="Martins E.A.L."/>
            <person name="Monteiro-Vitorello C.B."/>
            <person name="Ho P.L."/>
            <person name="Haake D.A."/>
            <person name="Verjovski-Almeida S."/>
            <person name="Hartskeerl R.A."/>
            <person name="Marques M.V."/>
            <person name="Oliveira M.C."/>
            <person name="Menck C.F.M."/>
            <person name="Leite L.C.C."/>
            <person name="Carrer H."/>
            <person name="Coutinho L.L."/>
            <person name="Degrave W.M."/>
            <person name="Dellagostin O.A."/>
            <person name="El-Dorry H."/>
            <person name="Ferro E.S."/>
            <person name="Ferro M.I.T."/>
            <person name="Furlan L.R."/>
            <person name="Gamberini M."/>
            <person name="Giglioti E.A."/>
            <person name="Goes-Neto A."/>
            <person name="Goldman G.H."/>
            <person name="Goldman M.H.S."/>
            <person name="Harakava R."/>
            <person name="Jeronimo S.M.B."/>
            <person name="Junqueira-de-Azevedo I.L.M."/>
            <person name="Kimura E.T."/>
            <person name="Kuramae E.E."/>
            <person name="Lemos E.G.M."/>
            <person name="Lemos M.V.F."/>
            <person name="Marino C.L."/>
            <person name="Nunes L.R."/>
            <person name="de Oliveira R.C."/>
            <person name="Pereira G.G."/>
            <person name="Reis M.S."/>
            <person name="Schriefer A."/>
            <person name="Siqueira W.J."/>
            <person name="Sommer P."/>
            <person name="Tsai S.M."/>
            <person name="Simpson A.J.G."/>
            <person name="Ferro J.A."/>
            <person name="Camargo L.E.A."/>
            <person name="Kitajima J.P."/>
            <person name="Setubal J.C."/>
            <person name="Van Sluys M.A."/>
        </authorList>
    </citation>
    <scope>NUCLEOTIDE SEQUENCE [LARGE SCALE GENOMIC DNA]</scope>
    <source>
        <strain>Fiocruz L1-130</strain>
    </source>
</reference>
<keyword id="KW-0067">ATP-binding</keyword>
<keyword id="KW-0133">Cell shape</keyword>
<keyword id="KW-0961">Cell wall biogenesis/degradation</keyword>
<keyword id="KW-0963">Cytoplasm</keyword>
<keyword id="KW-0436">Ligase</keyword>
<keyword id="KW-0460">Magnesium</keyword>
<keyword id="KW-0464">Manganese</keyword>
<keyword id="KW-0479">Metal-binding</keyword>
<keyword id="KW-0547">Nucleotide-binding</keyword>
<keyword id="KW-0573">Peptidoglycan synthesis</keyword>
<dbReference type="EC" id="6.3.2.4" evidence="2"/>
<dbReference type="EMBL" id="AE016823">
    <property type="protein sequence ID" value="AAS70441.1"/>
    <property type="molecule type" value="Genomic_DNA"/>
</dbReference>
<dbReference type="RefSeq" id="WP_001062346.1">
    <property type="nucleotide sequence ID" value="NC_005823.1"/>
</dbReference>
<dbReference type="SMR" id="Q72R93"/>
<dbReference type="KEGG" id="lic:LIC_11855"/>
<dbReference type="HOGENOM" id="CLU_039268_1_1_12"/>
<dbReference type="UniPathway" id="UPA00219"/>
<dbReference type="Proteomes" id="UP000007037">
    <property type="component" value="Chromosome I"/>
</dbReference>
<dbReference type="GO" id="GO:0005737">
    <property type="term" value="C:cytoplasm"/>
    <property type="evidence" value="ECO:0007669"/>
    <property type="project" value="UniProtKB-SubCell"/>
</dbReference>
<dbReference type="GO" id="GO:0005524">
    <property type="term" value="F:ATP binding"/>
    <property type="evidence" value="ECO:0007669"/>
    <property type="project" value="UniProtKB-KW"/>
</dbReference>
<dbReference type="GO" id="GO:0008716">
    <property type="term" value="F:D-alanine-D-alanine ligase activity"/>
    <property type="evidence" value="ECO:0007669"/>
    <property type="project" value="UniProtKB-UniRule"/>
</dbReference>
<dbReference type="GO" id="GO:0046872">
    <property type="term" value="F:metal ion binding"/>
    <property type="evidence" value="ECO:0007669"/>
    <property type="project" value="UniProtKB-KW"/>
</dbReference>
<dbReference type="GO" id="GO:0071555">
    <property type="term" value="P:cell wall organization"/>
    <property type="evidence" value="ECO:0007669"/>
    <property type="project" value="UniProtKB-KW"/>
</dbReference>
<dbReference type="GO" id="GO:0009252">
    <property type="term" value="P:peptidoglycan biosynthetic process"/>
    <property type="evidence" value="ECO:0007669"/>
    <property type="project" value="UniProtKB-UniRule"/>
</dbReference>
<dbReference type="GO" id="GO:0008360">
    <property type="term" value="P:regulation of cell shape"/>
    <property type="evidence" value="ECO:0007669"/>
    <property type="project" value="UniProtKB-KW"/>
</dbReference>
<dbReference type="Gene3D" id="3.40.50.20">
    <property type="match status" value="1"/>
</dbReference>
<dbReference type="Gene3D" id="3.30.1490.20">
    <property type="entry name" value="ATP-grasp fold, A domain"/>
    <property type="match status" value="1"/>
</dbReference>
<dbReference type="Gene3D" id="3.30.470.20">
    <property type="entry name" value="ATP-grasp fold, B domain"/>
    <property type="match status" value="1"/>
</dbReference>
<dbReference type="HAMAP" id="MF_00047">
    <property type="entry name" value="Dala_Dala_lig"/>
    <property type="match status" value="1"/>
</dbReference>
<dbReference type="InterPro" id="IPR011761">
    <property type="entry name" value="ATP-grasp"/>
</dbReference>
<dbReference type="InterPro" id="IPR013815">
    <property type="entry name" value="ATP_grasp_subdomain_1"/>
</dbReference>
<dbReference type="InterPro" id="IPR000291">
    <property type="entry name" value="D-Ala_lig_Van_CS"/>
</dbReference>
<dbReference type="InterPro" id="IPR005905">
    <property type="entry name" value="D_ala_D_ala"/>
</dbReference>
<dbReference type="InterPro" id="IPR011095">
    <property type="entry name" value="Dala_Dala_lig_C"/>
</dbReference>
<dbReference type="InterPro" id="IPR011127">
    <property type="entry name" value="Dala_Dala_lig_N"/>
</dbReference>
<dbReference type="InterPro" id="IPR016185">
    <property type="entry name" value="PreATP-grasp_dom_sf"/>
</dbReference>
<dbReference type="NCBIfam" id="TIGR01205">
    <property type="entry name" value="D_ala_D_alaTIGR"/>
    <property type="match status" value="1"/>
</dbReference>
<dbReference type="NCBIfam" id="NF002378">
    <property type="entry name" value="PRK01372.1"/>
    <property type="match status" value="1"/>
</dbReference>
<dbReference type="NCBIfam" id="NF002528">
    <property type="entry name" value="PRK01966.1-4"/>
    <property type="match status" value="1"/>
</dbReference>
<dbReference type="NCBIfam" id="NF011170">
    <property type="entry name" value="PRK14572.1"/>
    <property type="match status" value="1"/>
</dbReference>
<dbReference type="PANTHER" id="PTHR23132">
    <property type="entry name" value="D-ALANINE--D-ALANINE LIGASE"/>
    <property type="match status" value="1"/>
</dbReference>
<dbReference type="PANTHER" id="PTHR23132:SF23">
    <property type="entry name" value="D-ALANINE--D-ALANINE LIGASE B"/>
    <property type="match status" value="1"/>
</dbReference>
<dbReference type="Pfam" id="PF07478">
    <property type="entry name" value="Dala_Dala_lig_C"/>
    <property type="match status" value="1"/>
</dbReference>
<dbReference type="Pfam" id="PF01820">
    <property type="entry name" value="Dala_Dala_lig_N"/>
    <property type="match status" value="1"/>
</dbReference>
<dbReference type="PIRSF" id="PIRSF039102">
    <property type="entry name" value="Ddl/VanB"/>
    <property type="match status" value="1"/>
</dbReference>
<dbReference type="SUPFAM" id="SSF56059">
    <property type="entry name" value="Glutathione synthetase ATP-binding domain-like"/>
    <property type="match status" value="1"/>
</dbReference>
<dbReference type="SUPFAM" id="SSF52440">
    <property type="entry name" value="PreATP-grasp domain"/>
    <property type="match status" value="1"/>
</dbReference>
<dbReference type="PROSITE" id="PS50975">
    <property type="entry name" value="ATP_GRASP"/>
    <property type="match status" value="1"/>
</dbReference>
<dbReference type="PROSITE" id="PS00843">
    <property type="entry name" value="DALA_DALA_LIGASE_1"/>
    <property type="match status" value="1"/>
</dbReference>
<dbReference type="PROSITE" id="PS00844">
    <property type="entry name" value="DALA_DALA_LIGASE_2"/>
    <property type="match status" value="1"/>
</dbReference>
<accession>Q72R93</accession>
<sequence length="351" mass="38563">MAKIAVFFGGSSTEHSISILTGCFICKTLHTMGHSVKPILLTKDGGWVVPSEYRMSIPFEVSNSPDLFQEEFQKRYGVSRTNQIFSLDADIAFLGLHGGQGEDGTIQGFLEILGIPYTGSGVLASAIAMDKTRANQIFLQSGQKVAPFFEIDKLEYLNSTDAVITKLETLGFPQFLKPVEGGSSVSVYKITNREQLKEKLALIFESDSKVMSQSFLTGIEVSCGVLERYRDGKFKKIALPATEIVPGGEFFDFESKYKQGGSHEITPARISEQEMKRVQELAIAAHRSLGCSGYSRTDFIIVNGEPHILETNTLPGMTETSLIPQQAKAAGISMEEVFSDLIEIGLKRSLY</sequence>
<comment type="function">
    <text evidence="2">Cell wall formation.</text>
</comment>
<comment type="catalytic activity">
    <reaction evidence="2">
        <text>2 D-alanine + ATP = D-alanyl-D-alanine + ADP + phosphate + H(+)</text>
        <dbReference type="Rhea" id="RHEA:11224"/>
        <dbReference type="ChEBI" id="CHEBI:15378"/>
        <dbReference type="ChEBI" id="CHEBI:30616"/>
        <dbReference type="ChEBI" id="CHEBI:43474"/>
        <dbReference type="ChEBI" id="CHEBI:57416"/>
        <dbReference type="ChEBI" id="CHEBI:57822"/>
        <dbReference type="ChEBI" id="CHEBI:456216"/>
        <dbReference type="EC" id="6.3.2.4"/>
    </reaction>
</comment>
<comment type="cofactor">
    <cofactor evidence="1">
        <name>Mg(2+)</name>
        <dbReference type="ChEBI" id="CHEBI:18420"/>
    </cofactor>
    <cofactor evidence="1">
        <name>Mn(2+)</name>
        <dbReference type="ChEBI" id="CHEBI:29035"/>
    </cofactor>
    <text evidence="1">Binds 2 magnesium or manganese ions per subunit.</text>
</comment>
<comment type="pathway">
    <text evidence="2">Cell wall biogenesis; peptidoglycan biosynthesis.</text>
</comment>
<comment type="subcellular location">
    <subcellularLocation>
        <location evidence="2">Cytoplasm</location>
    </subcellularLocation>
</comment>
<comment type="similarity">
    <text evidence="2">Belongs to the D-alanine--D-alanine ligase family.</text>
</comment>
<gene>
    <name evidence="2" type="primary">ddl</name>
    <name type="synonym">ddlA</name>
    <name type="ordered locus">LIC_11855</name>
</gene>